<accession>Q4FLN6</accession>
<organism>
    <name type="scientific">Pelagibacter ubique (strain HTCC1062)</name>
    <dbReference type="NCBI Taxonomy" id="335992"/>
    <lineage>
        <taxon>Bacteria</taxon>
        <taxon>Pseudomonadati</taxon>
        <taxon>Pseudomonadota</taxon>
        <taxon>Alphaproteobacteria</taxon>
        <taxon>Candidatus Pelagibacterales</taxon>
        <taxon>Candidatus Pelagibacteraceae</taxon>
        <taxon>Candidatus Pelagibacter</taxon>
    </lineage>
</organism>
<evidence type="ECO:0000255" key="1">
    <source>
        <dbReference type="HAMAP-Rule" id="MF_01341"/>
    </source>
</evidence>
<evidence type="ECO:0000305" key="2"/>
<proteinExistence type="inferred from homology"/>
<comment type="function">
    <text evidence="1">Binds to the 23S rRNA.</text>
</comment>
<comment type="subunit">
    <text evidence="1">Part of the 50S ribosomal subunit.</text>
</comment>
<comment type="similarity">
    <text evidence="1">Belongs to the universal ribosomal protein uL15 family.</text>
</comment>
<keyword id="KW-1185">Reference proteome</keyword>
<keyword id="KW-0687">Ribonucleoprotein</keyword>
<keyword id="KW-0689">Ribosomal protein</keyword>
<keyword id="KW-0694">RNA-binding</keyword>
<keyword id="KW-0699">rRNA-binding</keyword>
<gene>
    <name evidence="1" type="primary">rplO</name>
    <name type="ordered locus">SAR11_1099</name>
</gene>
<name>RL15_PELUB</name>
<protein>
    <recommendedName>
        <fullName evidence="1">Large ribosomal subunit protein uL15</fullName>
    </recommendedName>
    <alternativeName>
        <fullName evidence="2">50S ribosomal protein L15</fullName>
    </alternativeName>
</protein>
<dbReference type="EMBL" id="CP000084">
    <property type="protein sequence ID" value="AAZ21902.1"/>
    <property type="molecule type" value="Genomic_DNA"/>
</dbReference>
<dbReference type="RefSeq" id="WP_006996829.1">
    <property type="nucleotide sequence ID" value="NC_007205.1"/>
</dbReference>
<dbReference type="SMR" id="Q4FLN6"/>
<dbReference type="STRING" id="335992.SAR11_1099"/>
<dbReference type="GeneID" id="66295588"/>
<dbReference type="KEGG" id="pub:SAR11_1099"/>
<dbReference type="eggNOG" id="COG0200">
    <property type="taxonomic scope" value="Bacteria"/>
</dbReference>
<dbReference type="HOGENOM" id="CLU_055188_4_0_5"/>
<dbReference type="OrthoDB" id="9810293at2"/>
<dbReference type="Proteomes" id="UP000002528">
    <property type="component" value="Chromosome"/>
</dbReference>
<dbReference type="GO" id="GO:0022625">
    <property type="term" value="C:cytosolic large ribosomal subunit"/>
    <property type="evidence" value="ECO:0007669"/>
    <property type="project" value="TreeGrafter"/>
</dbReference>
<dbReference type="GO" id="GO:0019843">
    <property type="term" value="F:rRNA binding"/>
    <property type="evidence" value="ECO:0007669"/>
    <property type="project" value="UniProtKB-UniRule"/>
</dbReference>
<dbReference type="GO" id="GO:0003735">
    <property type="term" value="F:structural constituent of ribosome"/>
    <property type="evidence" value="ECO:0007669"/>
    <property type="project" value="InterPro"/>
</dbReference>
<dbReference type="GO" id="GO:0006412">
    <property type="term" value="P:translation"/>
    <property type="evidence" value="ECO:0007669"/>
    <property type="project" value="UniProtKB-UniRule"/>
</dbReference>
<dbReference type="Gene3D" id="3.100.10.10">
    <property type="match status" value="1"/>
</dbReference>
<dbReference type="HAMAP" id="MF_01341">
    <property type="entry name" value="Ribosomal_uL15"/>
    <property type="match status" value="1"/>
</dbReference>
<dbReference type="InterPro" id="IPR030878">
    <property type="entry name" value="Ribosomal_uL15"/>
</dbReference>
<dbReference type="InterPro" id="IPR021131">
    <property type="entry name" value="Ribosomal_uL15/eL18"/>
</dbReference>
<dbReference type="InterPro" id="IPR036227">
    <property type="entry name" value="Ribosomal_uL15/eL18_sf"/>
</dbReference>
<dbReference type="InterPro" id="IPR005749">
    <property type="entry name" value="Ribosomal_uL15_bac-type"/>
</dbReference>
<dbReference type="InterPro" id="IPR001196">
    <property type="entry name" value="Ribosomal_uL15_CS"/>
</dbReference>
<dbReference type="NCBIfam" id="TIGR01071">
    <property type="entry name" value="rplO_bact"/>
    <property type="match status" value="1"/>
</dbReference>
<dbReference type="PANTHER" id="PTHR12934">
    <property type="entry name" value="50S RIBOSOMAL PROTEIN L15"/>
    <property type="match status" value="1"/>
</dbReference>
<dbReference type="PANTHER" id="PTHR12934:SF11">
    <property type="entry name" value="LARGE RIBOSOMAL SUBUNIT PROTEIN UL15M"/>
    <property type="match status" value="1"/>
</dbReference>
<dbReference type="Pfam" id="PF00828">
    <property type="entry name" value="Ribosomal_L27A"/>
    <property type="match status" value="1"/>
</dbReference>
<dbReference type="SUPFAM" id="SSF52080">
    <property type="entry name" value="Ribosomal proteins L15p and L18e"/>
    <property type="match status" value="1"/>
</dbReference>
<dbReference type="PROSITE" id="PS00475">
    <property type="entry name" value="RIBOSOMAL_L15"/>
    <property type="match status" value="1"/>
</dbReference>
<reference key="1">
    <citation type="journal article" date="2005" name="Science">
        <title>Genome streamlining in a cosmopolitan oceanic bacterium.</title>
        <authorList>
            <person name="Giovannoni S.J."/>
            <person name="Tripp H.J."/>
            <person name="Givan S."/>
            <person name="Podar M."/>
            <person name="Vergin K.L."/>
            <person name="Baptista D."/>
            <person name="Bibbs L."/>
            <person name="Eads J."/>
            <person name="Richardson T.H."/>
            <person name="Noordewier M."/>
            <person name="Rappe M.S."/>
            <person name="Short J.M."/>
            <person name="Carrington J.C."/>
            <person name="Mathur E.J."/>
        </authorList>
    </citation>
    <scope>NUCLEOTIDE SEQUENCE [LARGE SCALE GENOMIC DNA]</scope>
    <source>
        <strain>HTCC1062</strain>
    </source>
</reference>
<feature type="chain" id="PRO_0000104775" description="Large ribosomal subunit protein uL15">
    <location>
        <begin position="1"/>
        <end position="153"/>
    </location>
</feature>
<sequence>MTTLNTTGKVLYKKKMRVGRGIGSGKGKTSGRGVKGQKSRSGVAIKAFEGGQMPLYRRLPKRGFNAIKRYQAVIAIMNLEKIQTFITEKTINSGDVINMALLKKLKLINKNSQKLKILGTGEIKDKVNIEADLISKSAVEKLEKAGGTIQLKK</sequence>